<dbReference type="EMBL" id="CP000034">
    <property type="protein sequence ID" value="ABB62904.1"/>
    <property type="molecule type" value="Genomic_DNA"/>
</dbReference>
<dbReference type="RefSeq" id="WP_000080962.1">
    <property type="nucleotide sequence ID" value="NC_007606.1"/>
</dbReference>
<dbReference type="RefSeq" id="YP_404395.1">
    <property type="nucleotide sequence ID" value="NC_007606.1"/>
</dbReference>
<dbReference type="SMR" id="Q32CQ1"/>
<dbReference type="STRING" id="300267.SDY_2867"/>
<dbReference type="EnsemblBacteria" id="ABB62904">
    <property type="protein sequence ID" value="ABB62904"/>
    <property type="gene ID" value="SDY_2867"/>
</dbReference>
<dbReference type="KEGG" id="sdy:SDY_2867"/>
<dbReference type="PATRIC" id="fig|300267.13.peg.3446"/>
<dbReference type="HOGENOM" id="CLU_114845_0_0_6"/>
<dbReference type="Proteomes" id="UP000002716">
    <property type="component" value="Chromosome"/>
</dbReference>
<dbReference type="GO" id="GO:0010181">
    <property type="term" value="F:FMN binding"/>
    <property type="evidence" value="ECO:0007669"/>
    <property type="project" value="InterPro"/>
</dbReference>
<dbReference type="GO" id="GO:0036211">
    <property type="term" value="P:protein modification process"/>
    <property type="evidence" value="ECO:0007669"/>
    <property type="project" value="InterPro"/>
</dbReference>
<dbReference type="FunFam" id="3.40.50.360:FF:000005">
    <property type="entry name" value="Protein NrdI"/>
    <property type="match status" value="1"/>
</dbReference>
<dbReference type="Gene3D" id="3.40.50.360">
    <property type="match status" value="1"/>
</dbReference>
<dbReference type="HAMAP" id="MF_00128">
    <property type="entry name" value="NrdI"/>
    <property type="match status" value="1"/>
</dbReference>
<dbReference type="InterPro" id="IPR029039">
    <property type="entry name" value="Flavoprotein-like_sf"/>
</dbReference>
<dbReference type="InterPro" id="IPR020852">
    <property type="entry name" value="RNR_Ib_NrdI_bac"/>
</dbReference>
<dbReference type="InterPro" id="IPR004465">
    <property type="entry name" value="RNR_NrdI"/>
</dbReference>
<dbReference type="NCBIfam" id="TIGR00333">
    <property type="entry name" value="nrdI"/>
    <property type="match status" value="1"/>
</dbReference>
<dbReference type="PANTHER" id="PTHR37297">
    <property type="entry name" value="PROTEIN NRDI"/>
    <property type="match status" value="1"/>
</dbReference>
<dbReference type="PANTHER" id="PTHR37297:SF1">
    <property type="entry name" value="PROTEIN NRDI"/>
    <property type="match status" value="1"/>
</dbReference>
<dbReference type="Pfam" id="PF07972">
    <property type="entry name" value="Flavodoxin_NdrI"/>
    <property type="match status" value="1"/>
</dbReference>
<dbReference type="PIRSF" id="PIRSF005087">
    <property type="entry name" value="NrdI"/>
    <property type="match status" value="1"/>
</dbReference>
<dbReference type="SUPFAM" id="SSF52218">
    <property type="entry name" value="Flavoproteins"/>
    <property type="match status" value="1"/>
</dbReference>
<organism>
    <name type="scientific">Shigella dysenteriae serotype 1 (strain Sd197)</name>
    <dbReference type="NCBI Taxonomy" id="300267"/>
    <lineage>
        <taxon>Bacteria</taxon>
        <taxon>Pseudomonadati</taxon>
        <taxon>Pseudomonadota</taxon>
        <taxon>Gammaproteobacteria</taxon>
        <taxon>Enterobacterales</taxon>
        <taxon>Enterobacteriaceae</taxon>
        <taxon>Shigella</taxon>
    </lineage>
</organism>
<protein>
    <recommendedName>
        <fullName evidence="1">Protein NrdI</fullName>
    </recommendedName>
</protein>
<accession>Q32CQ1</accession>
<gene>
    <name evidence="1" type="primary">nrdI</name>
    <name type="ordered locus">SDY_2867</name>
</gene>
<reference key="1">
    <citation type="journal article" date="2005" name="Nucleic Acids Res.">
        <title>Genome dynamics and diversity of Shigella species, the etiologic agents of bacillary dysentery.</title>
        <authorList>
            <person name="Yang F."/>
            <person name="Yang J."/>
            <person name="Zhang X."/>
            <person name="Chen L."/>
            <person name="Jiang Y."/>
            <person name="Yan Y."/>
            <person name="Tang X."/>
            <person name="Wang J."/>
            <person name="Xiong Z."/>
            <person name="Dong J."/>
            <person name="Xue Y."/>
            <person name="Zhu Y."/>
            <person name="Xu X."/>
            <person name="Sun L."/>
            <person name="Chen S."/>
            <person name="Nie H."/>
            <person name="Peng J."/>
            <person name="Xu J."/>
            <person name="Wang Y."/>
            <person name="Yuan Z."/>
            <person name="Wen Y."/>
            <person name="Yao Z."/>
            <person name="Shen Y."/>
            <person name="Qiang B."/>
            <person name="Hou Y."/>
            <person name="Yu J."/>
            <person name="Jin Q."/>
        </authorList>
    </citation>
    <scope>NUCLEOTIDE SEQUENCE [LARGE SCALE GENOMIC DNA]</scope>
    <source>
        <strain>Sd197</strain>
    </source>
</reference>
<keyword id="KW-1185">Reference proteome</keyword>
<sequence length="136" mass="15311">MSQLVYFSSSSENTQRFIERLGLPAVRIPLNERKQIQVDEPYILIVPSYGGGGTAGAVPRQVIRFLNDEHNRALLRGVIASGNRNFGEAYGRAGDVIARKCGVPWLYRFELMGTQSDIENVRKGVTEFWQRQPQNA</sequence>
<name>NRDI_SHIDS</name>
<evidence type="ECO:0000255" key="1">
    <source>
        <dbReference type="HAMAP-Rule" id="MF_00128"/>
    </source>
</evidence>
<feature type="chain" id="PRO_1000016522" description="Protein NrdI">
    <location>
        <begin position="1"/>
        <end position="136"/>
    </location>
</feature>
<comment type="function">
    <text evidence="1">Probably involved in ribonucleotide reductase function.</text>
</comment>
<comment type="similarity">
    <text evidence="1">Belongs to the NrdI family.</text>
</comment>
<proteinExistence type="inferred from homology"/>